<comment type="catalytic activity">
    <reaction evidence="1">
        <text>tRNA(Arg) + L-arginine + ATP = L-arginyl-tRNA(Arg) + AMP + diphosphate</text>
        <dbReference type="Rhea" id="RHEA:20301"/>
        <dbReference type="Rhea" id="RHEA-COMP:9658"/>
        <dbReference type="Rhea" id="RHEA-COMP:9673"/>
        <dbReference type="ChEBI" id="CHEBI:30616"/>
        <dbReference type="ChEBI" id="CHEBI:32682"/>
        <dbReference type="ChEBI" id="CHEBI:33019"/>
        <dbReference type="ChEBI" id="CHEBI:78442"/>
        <dbReference type="ChEBI" id="CHEBI:78513"/>
        <dbReference type="ChEBI" id="CHEBI:456215"/>
        <dbReference type="EC" id="6.1.1.19"/>
    </reaction>
</comment>
<comment type="subunit">
    <text evidence="1">Monomer.</text>
</comment>
<comment type="subcellular location">
    <subcellularLocation>
        <location evidence="1">Cytoplasm</location>
    </subcellularLocation>
</comment>
<comment type="similarity">
    <text evidence="1">Belongs to the class-I aminoacyl-tRNA synthetase family.</text>
</comment>
<reference key="1">
    <citation type="journal article" date="2003" name="Nature">
        <title>The genome of a motile marine Synechococcus.</title>
        <authorList>
            <person name="Palenik B."/>
            <person name="Brahamsha B."/>
            <person name="Larimer F.W."/>
            <person name="Land M.L."/>
            <person name="Hauser L."/>
            <person name="Chain P."/>
            <person name="Lamerdin J.E."/>
            <person name="Regala W."/>
            <person name="Allen E.E."/>
            <person name="McCarren J."/>
            <person name="Paulsen I.T."/>
            <person name="Dufresne A."/>
            <person name="Partensky F."/>
            <person name="Webb E.A."/>
            <person name="Waterbury J."/>
        </authorList>
    </citation>
    <scope>NUCLEOTIDE SEQUENCE [LARGE SCALE GENOMIC DNA]</scope>
    <source>
        <strain>WH8102</strain>
    </source>
</reference>
<evidence type="ECO:0000255" key="1">
    <source>
        <dbReference type="HAMAP-Rule" id="MF_00123"/>
    </source>
</evidence>
<feature type="chain" id="PRO_0000151626" description="Arginine--tRNA ligase">
    <location>
        <begin position="1"/>
        <end position="597"/>
    </location>
</feature>
<feature type="short sequence motif" description="'HIGH' region">
    <location>
        <begin position="137"/>
        <end position="147"/>
    </location>
</feature>
<sequence>MPDVPALMLSLSNTLDAQLRAAMQRAFPVADAVLDPQLAPASKPEFGDFQANGALPLAKPLKQAPRQIATAIVEQLQADSGFTDLCLEPQIAGPGFINLTIRPERLAAEVSARLGDERLGVPAVEQAAPVVVDFSSPNIAKEMHVGHLRSTIIGDSLARVLEFRGHTVLRLNHVGDWGTQFGMLITHLKQVAPDALETADAVDLGDLVAFYREAKKRFDDDEAFQSTSREEVVKLQGGDPVSLKAWGLLCDQSRREFQKIYDRLDIRLNERGESFYNPFLPAVIDGLKAAELLVTDDGAQCVFLEGVQGKDGKPLPVIVQKSDGGFNYATTDLAAIRYRFGAAPDGDGARRVVYVTDAGQANHFAGVFQVAERAGWIPDGARLEHVPFGLVQGEDGKKLKTRAGDTVRLRDLLDEAVERAETDLRSRLKEEERSESEEFIQNVAGTVGLAAVKYADLSQNRITNYQFSFDRMLALQGNTAPYLLYAVVRIAGIARKGGDLEVSTGQLQFSEPQEWALVRELLKFDSVIAEVEEELLPNRLCSYLFELSQVFNRFYDQVPVLKADPEALASRLALCRLTADTLRLGLGLLGIATLDRM</sequence>
<gene>
    <name evidence="1" type="primary">argS</name>
    <name type="ordered locus">SYNW2319</name>
</gene>
<organism>
    <name type="scientific">Parasynechococcus marenigrum (strain WH8102)</name>
    <dbReference type="NCBI Taxonomy" id="84588"/>
    <lineage>
        <taxon>Bacteria</taxon>
        <taxon>Bacillati</taxon>
        <taxon>Cyanobacteriota</taxon>
        <taxon>Cyanophyceae</taxon>
        <taxon>Synechococcales</taxon>
        <taxon>Prochlorococcaceae</taxon>
        <taxon>Parasynechococcus</taxon>
        <taxon>Parasynechococcus marenigrum</taxon>
    </lineage>
</organism>
<accession>Q7U3V8</accession>
<name>SYR_PARMW</name>
<dbReference type="EC" id="6.1.1.19" evidence="1"/>
<dbReference type="EMBL" id="BX569695">
    <property type="protein sequence ID" value="CAE08834.1"/>
    <property type="molecule type" value="Genomic_DNA"/>
</dbReference>
<dbReference type="SMR" id="Q7U3V8"/>
<dbReference type="STRING" id="84588.SYNW2319"/>
<dbReference type="KEGG" id="syw:SYNW2319"/>
<dbReference type="eggNOG" id="COG0018">
    <property type="taxonomic scope" value="Bacteria"/>
</dbReference>
<dbReference type="HOGENOM" id="CLU_006406_5_1_3"/>
<dbReference type="Proteomes" id="UP000001422">
    <property type="component" value="Chromosome"/>
</dbReference>
<dbReference type="GO" id="GO:0005737">
    <property type="term" value="C:cytoplasm"/>
    <property type="evidence" value="ECO:0007669"/>
    <property type="project" value="UniProtKB-SubCell"/>
</dbReference>
<dbReference type="GO" id="GO:0004814">
    <property type="term" value="F:arginine-tRNA ligase activity"/>
    <property type="evidence" value="ECO:0007669"/>
    <property type="project" value="UniProtKB-UniRule"/>
</dbReference>
<dbReference type="GO" id="GO:0005524">
    <property type="term" value="F:ATP binding"/>
    <property type="evidence" value="ECO:0007669"/>
    <property type="project" value="UniProtKB-UniRule"/>
</dbReference>
<dbReference type="GO" id="GO:0006420">
    <property type="term" value="P:arginyl-tRNA aminoacylation"/>
    <property type="evidence" value="ECO:0007669"/>
    <property type="project" value="UniProtKB-UniRule"/>
</dbReference>
<dbReference type="CDD" id="cd00671">
    <property type="entry name" value="ArgRS_core"/>
    <property type="match status" value="1"/>
</dbReference>
<dbReference type="FunFam" id="3.40.50.620:FF:000030">
    <property type="entry name" value="Arginine--tRNA ligase"/>
    <property type="match status" value="1"/>
</dbReference>
<dbReference type="FunFam" id="1.10.730.10:FF:000006">
    <property type="entry name" value="Arginyl-tRNA synthetase 2, mitochondrial"/>
    <property type="match status" value="1"/>
</dbReference>
<dbReference type="Gene3D" id="3.30.1360.70">
    <property type="entry name" value="Arginyl tRNA synthetase N-terminal domain"/>
    <property type="match status" value="1"/>
</dbReference>
<dbReference type="Gene3D" id="3.40.50.620">
    <property type="entry name" value="HUPs"/>
    <property type="match status" value="1"/>
</dbReference>
<dbReference type="Gene3D" id="1.10.730.10">
    <property type="entry name" value="Isoleucyl-tRNA Synthetase, Domain 1"/>
    <property type="match status" value="1"/>
</dbReference>
<dbReference type="HAMAP" id="MF_00123">
    <property type="entry name" value="Arg_tRNA_synth"/>
    <property type="match status" value="1"/>
</dbReference>
<dbReference type="InterPro" id="IPR001412">
    <property type="entry name" value="aa-tRNA-synth_I_CS"/>
</dbReference>
<dbReference type="InterPro" id="IPR001278">
    <property type="entry name" value="Arg-tRNA-ligase"/>
</dbReference>
<dbReference type="InterPro" id="IPR005148">
    <property type="entry name" value="Arg-tRNA-synth_N"/>
</dbReference>
<dbReference type="InterPro" id="IPR036695">
    <property type="entry name" value="Arg-tRNA-synth_N_sf"/>
</dbReference>
<dbReference type="InterPro" id="IPR035684">
    <property type="entry name" value="ArgRS_core"/>
</dbReference>
<dbReference type="InterPro" id="IPR008909">
    <property type="entry name" value="DALR_anticod-bd"/>
</dbReference>
<dbReference type="InterPro" id="IPR014729">
    <property type="entry name" value="Rossmann-like_a/b/a_fold"/>
</dbReference>
<dbReference type="InterPro" id="IPR009080">
    <property type="entry name" value="tRNAsynth_Ia_anticodon-bd"/>
</dbReference>
<dbReference type="NCBIfam" id="TIGR00456">
    <property type="entry name" value="argS"/>
    <property type="match status" value="1"/>
</dbReference>
<dbReference type="PANTHER" id="PTHR11956:SF5">
    <property type="entry name" value="ARGININE--TRNA LIGASE, CYTOPLASMIC"/>
    <property type="match status" value="1"/>
</dbReference>
<dbReference type="PANTHER" id="PTHR11956">
    <property type="entry name" value="ARGINYL-TRNA SYNTHETASE"/>
    <property type="match status" value="1"/>
</dbReference>
<dbReference type="Pfam" id="PF03485">
    <property type="entry name" value="Arg_tRNA_synt_N"/>
    <property type="match status" value="1"/>
</dbReference>
<dbReference type="Pfam" id="PF05746">
    <property type="entry name" value="DALR_1"/>
    <property type="match status" value="1"/>
</dbReference>
<dbReference type="Pfam" id="PF00750">
    <property type="entry name" value="tRNA-synt_1d"/>
    <property type="match status" value="1"/>
</dbReference>
<dbReference type="PRINTS" id="PR01038">
    <property type="entry name" value="TRNASYNTHARG"/>
</dbReference>
<dbReference type="SMART" id="SM01016">
    <property type="entry name" value="Arg_tRNA_synt_N"/>
    <property type="match status" value="1"/>
</dbReference>
<dbReference type="SMART" id="SM00836">
    <property type="entry name" value="DALR_1"/>
    <property type="match status" value="1"/>
</dbReference>
<dbReference type="SUPFAM" id="SSF47323">
    <property type="entry name" value="Anticodon-binding domain of a subclass of class I aminoacyl-tRNA synthetases"/>
    <property type="match status" value="1"/>
</dbReference>
<dbReference type="SUPFAM" id="SSF55190">
    <property type="entry name" value="Arginyl-tRNA synthetase (ArgRS), N-terminal 'additional' domain"/>
    <property type="match status" value="1"/>
</dbReference>
<dbReference type="SUPFAM" id="SSF52374">
    <property type="entry name" value="Nucleotidylyl transferase"/>
    <property type="match status" value="1"/>
</dbReference>
<dbReference type="PROSITE" id="PS00178">
    <property type="entry name" value="AA_TRNA_LIGASE_I"/>
    <property type="match status" value="1"/>
</dbReference>
<protein>
    <recommendedName>
        <fullName evidence="1">Arginine--tRNA ligase</fullName>
        <ecNumber evidence="1">6.1.1.19</ecNumber>
    </recommendedName>
    <alternativeName>
        <fullName evidence="1">Arginyl-tRNA synthetase</fullName>
        <shortName evidence="1">ArgRS</shortName>
    </alternativeName>
</protein>
<proteinExistence type="inferred from homology"/>
<keyword id="KW-0030">Aminoacyl-tRNA synthetase</keyword>
<keyword id="KW-0067">ATP-binding</keyword>
<keyword id="KW-0963">Cytoplasm</keyword>
<keyword id="KW-0436">Ligase</keyword>
<keyword id="KW-0547">Nucleotide-binding</keyword>
<keyword id="KW-0648">Protein biosynthesis</keyword>